<gene>
    <name type="primary">TOC75</name>
    <name type="ordered locus">Os03g0271200</name>
    <name type="ordered locus">LOC_Os03g16440</name>
    <name type="ORF">OJ1261C08.8</name>
</gene>
<evidence type="ECO:0000250" key="1"/>
<evidence type="ECO:0000255" key="2"/>
<evidence type="ECO:0000256" key="3">
    <source>
        <dbReference type="SAM" id="MobiDB-lite"/>
    </source>
</evidence>
<evidence type="ECO:0000305" key="4"/>
<name>TOC75_ORYSJ</name>
<comment type="function">
    <text evidence="1">Mediates the insertion of proteins targeted to the outer membrane of chloroplasts. Required for the import of protein precursors into chloroplasts. Forms the voltage-dependent preprotein translocation channels (hydrophilic beta barrel) of the TOC complex in the chloroplastic outer membrane (By similarity).</text>
</comment>
<comment type="subunit">
    <text evidence="1">Part of the TOC core complex that includes a protein for the specific recognition of transit peptides surrounded by a ring composed of four proteins forming translocation channels, and four to five GTP-binding proteins providing energy. This core complex can interact with components of the TIC complex to form a larger import complex. Chloroplastic protein precursors also interact with these complexes (By similarity).</text>
</comment>
<comment type="subcellular location">
    <subcellularLocation>
        <location evidence="4">Plastid</location>
        <location evidence="4">Chloroplast outer membrane</location>
        <topology evidence="4">Multi-pass membrane protein</topology>
    </subcellularLocation>
</comment>
<comment type="domain">
    <text>Transmembrane regions consist mainly of membrane-spanning sided beta-sheets, which are not predicted by sequence analysis tools.</text>
</comment>
<comment type="similarity">
    <text evidence="4">Belongs to the TOC75 family.</text>
</comment>
<comment type="sequence caution" evidence="4">
    <conflict type="erroneous gene model prediction">
        <sequence resource="EMBL-CDS" id="AAP06869"/>
    </conflict>
</comment>
<comment type="sequence caution" evidence="4">
    <conflict type="frameshift">
        <sequence resource="EMBL" id="AK120241"/>
    </conflict>
</comment>
<accession>Q84Q83</accession>
<accession>Q10NF2</accession>
<reference key="1">
    <citation type="journal article" date="2005" name="Genome Res.">
        <title>Sequence, annotation, and analysis of synteny between rice chromosome 3 and diverged grass species.</title>
        <authorList>
            <consortium name="The rice chromosome 3 sequencing consortium"/>
            <person name="Buell C.R."/>
            <person name="Yuan Q."/>
            <person name="Ouyang S."/>
            <person name="Liu J."/>
            <person name="Zhu W."/>
            <person name="Wang A."/>
            <person name="Maiti R."/>
            <person name="Haas B."/>
            <person name="Wortman J."/>
            <person name="Pertea M."/>
            <person name="Jones K.M."/>
            <person name="Kim M."/>
            <person name="Overton L."/>
            <person name="Tsitrin T."/>
            <person name="Fadrosh D."/>
            <person name="Bera J."/>
            <person name="Weaver B."/>
            <person name="Jin S."/>
            <person name="Johri S."/>
            <person name="Reardon M."/>
            <person name="Webb K."/>
            <person name="Hill J."/>
            <person name="Moffat K."/>
            <person name="Tallon L."/>
            <person name="Van Aken S."/>
            <person name="Lewis M."/>
            <person name="Utterback T."/>
            <person name="Feldblyum T."/>
            <person name="Zismann V."/>
            <person name="Iobst S."/>
            <person name="Hsiao J."/>
            <person name="de Vazeille A.R."/>
            <person name="Salzberg S.L."/>
            <person name="White O."/>
            <person name="Fraser C.M."/>
            <person name="Yu Y."/>
            <person name="Kim H."/>
            <person name="Rambo T."/>
            <person name="Currie J."/>
            <person name="Collura K."/>
            <person name="Kernodle-Thompson S."/>
            <person name="Wei F."/>
            <person name="Kudrna K."/>
            <person name="Ammiraju J.S.S."/>
            <person name="Luo M."/>
            <person name="Goicoechea J.L."/>
            <person name="Wing R.A."/>
            <person name="Henry D."/>
            <person name="Oates R."/>
            <person name="Palmer M."/>
            <person name="Pries G."/>
            <person name="Saski C."/>
            <person name="Simmons J."/>
            <person name="Soderlund C."/>
            <person name="Nelson W."/>
            <person name="de la Bastide M."/>
            <person name="Spiegel L."/>
            <person name="Nascimento L."/>
            <person name="Huang E."/>
            <person name="Preston R."/>
            <person name="Zutavern T."/>
            <person name="Palmer L."/>
            <person name="O'Shaughnessy A."/>
            <person name="Dike S."/>
            <person name="McCombie W.R."/>
            <person name="Minx P."/>
            <person name="Cordum H."/>
            <person name="Wilson R."/>
            <person name="Jin W."/>
            <person name="Lee H.R."/>
            <person name="Jiang J."/>
            <person name="Jackson S."/>
        </authorList>
    </citation>
    <scope>NUCLEOTIDE SEQUENCE [LARGE SCALE GENOMIC DNA]</scope>
    <source>
        <strain>cv. Nipponbare</strain>
    </source>
</reference>
<reference key="2">
    <citation type="journal article" date="2005" name="Nature">
        <title>The map-based sequence of the rice genome.</title>
        <authorList>
            <consortium name="International rice genome sequencing project (IRGSP)"/>
        </authorList>
    </citation>
    <scope>NUCLEOTIDE SEQUENCE [LARGE SCALE GENOMIC DNA]</scope>
    <source>
        <strain>cv. Nipponbare</strain>
    </source>
</reference>
<reference key="3">
    <citation type="journal article" date="2008" name="Nucleic Acids Res.">
        <title>The rice annotation project database (RAP-DB): 2008 update.</title>
        <authorList>
            <consortium name="The rice annotation project (RAP)"/>
        </authorList>
    </citation>
    <scope>GENOME REANNOTATION</scope>
    <source>
        <strain>cv. Nipponbare</strain>
    </source>
</reference>
<reference key="4">
    <citation type="journal article" date="2013" name="Rice">
        <title>Improvement of the Oryza sativa Nipponbare reference genome using next generation sequence and optical map data.</title>
        <authorList>
            <person name="Kawahara Y."/>
            <person name="de la Bastide M."/>
            <person name="Hamilton J.P."/>
            <person name="Kanamori H."/>
            <person name="McCombie W.R."/>
            <person name="Ouyang S."/>
            <person name="Schwartz D.C."/>
            <person name="Tanaka T."/>
            <person name="Wu J."/>
            <person name="Zhou S."/>
            <person name="Childs K.L."/>
            <person name="Davidson R.M."/>
            <person name="Lin H."/>
            <person name="Quesada-Ocampo L."/>
            <person name="Vaillancourt B."/>
            <person name="Sakai H."/>
            <person name="Lee S.S."/>
            <person name="Kim J."/>
            <person name="Numa H."/>
            <person name="Itoh T."/>
            <person name="Buell C.R."/>
            <person name="Matsumoto T."/>
        </authorList>
    </citation>
    <scope>GENOME REANNOTATION</scope>
    <source>
        <strain>cv. Nipponbare</strain>
    </source>
</reference>
<reference key="5">
    <citation type="journal article" date="2003" name="Science">
        <title>Collection, mapping, and annotation of over 28,000 cDNA clones from japonica rice.</title>
        <authorList>
            <consortium name="The rice full-length cDNA consortium"/>
        </authorList>
    </citation>
    <scope>NUCLEOTIDE SEQUENCE [LARGE SCALE MRNA]</scope>
    <source>
        <strain>cv. Nipponbare</strain>
    </source>
</reference>
<feature type="transit peptide" description="Chloroplast" evidence="2">
    <location>
        <begin position="1"/>
        <end position="31"/>
    </location>
</feature>
<feature type="transit peptide" description="Chloroplast; outer membrane" evidence="1">
    <location>
        <begin position="32"/>
        <end position="135"/>
    </location>
</feature>
<feature type="chain" id="PRO_0000042822" description="Protein TOC75, chloroplastic">
    <location>
        <begin position="136"/>
        <end position="817"/>
    </location>
</feature>
<feature type="topological domain" description="Chloroplast intermembrane" evidence="2">
    <location>
        <begin position="136"/>
        <end position="147"/>
    </location>
</feature>
<feature type="transmembrane region" description="Beta stranded" evidence="2">
    <location>
        <begin position="148"/>
        <end position="156"/>
    </location>
</feature>
<feature type="topological domain" description="Cytoplasmic" evidence="2">
    <location>
        <begin position="157"/>
        <end position="164"/>
    </location>
</feature>
<feature type="transmembrane region" description="Beta stranded" evidence="2">
    <location>
        <begin position="165"/>
        <end position="173"/>
    </location>
</feature>
<feature type="topological domain" description="Chloroplast intermembrane" evidence="2">
    <location>
        <begin position="174"/>
        <end position="232"/>
    </location>
</feature>
<feature type="transmembrane region" description="Beta stranded" evidence="2">
    <location>
        <begin position="233"/>
        <end position="241"/>
    </location>
</feature>
<feature type="topological domain" description="Cytoplasmic" evidence="2">
    <location>
        <begin position="242"/>
        <end position="254"/>
    </location>
</feature>
<feature type="transmembrane region" description="Beta stranded" evidence="2">
    <location>
        <begin position="255"/>
        <end position="261"/>
    </location>
</feature>
<feature type="topological domain" description="Chloroplast intermembrane" evidence="2">
    <location>
        <begin position="262"/>
        <end position="364"/>
    </location>
</feature>
<feature type="transmembrane region" description="Beta stranded" evidence="2">
    <location>
        <begin position="365"/>
        <end position="372"/>
    </location>
</feature>
<feature type="topological domain" description="Cytoplasmic" evidence="2">
    <location>
        <begin position="373"/>
        <end position="417"/>
    </location>
</feature>
<feature type="transmembrane region" description="Beta stranded" evidence="2">
    <location>
        <begin position="418"/>
        <end position="425"/>
    </location>
</feature>
<feature type="topological domain" description="Chloroplast intermembrane" evidence="2">
    <location>
        <begin position="426"/>
        <end position="434"/>
    </location>
</feature>
<feature type="transmembrane region" description="Beta stranded" evidence="2">
    <location>
        <begin position="435"/>
        <end position="443"/>
    </location>
</feature>
<feature type="topological domain" description="Cytoplasmic" evidence="2">
    <location>
        <begin position="444"/>
        <end position="449"/>
    </location>
</feature>
<feature type="transmembrane region" description="Beta stranded" evidence="2">
    <location>
        <begin position="450"/>
        <end position="459"/>
    </location>
</feature>
<feature type="topological domain" description="Chloroplast intermembrane" evidence="2">
    <location>
        <begin position="460"/>
        <end position="471"/>
    </location>
</feature>
<feature type="transmembrane region" description="Beta stranded" evidence="2">
    <location>
        <begin position="472"/>
        <end position="480"/>
    </location>
</feature>
<feature type="topological domain" description="Cytoplasmic" evidence="2">
    <location>
        <begin position="481"/>
        <end position="507"/>
    </location>
</feature>
<feature type="transmembrane region" description="Beta stranded" evidence="2">
    <location>
        <begin position="508"/>
        <end position="516"/>
    </location>
</feature>
<feature type="topological domain" description="Chloroplast intermembrane" evidence="2">
    <location>
        <begin position="517"/>
        <end position="561"/>
    </location>
</feature>
<feature type="transmembrane region" description="Beta stranded" evidence="2">
    <location>
        <begin position="562"/>
        <end position="569"/>
    </location>
</feature>
<feature type="topological domain" description="Cytoplasmic" evidence="2">
    <location>
        <begin position="570"/>
        <end position="577"/>
    </location>
</feature>
<feature type="transmembrane region" description="Beta stranded" evidence="2">
    <location>
        <begin position="578"/>
        <end position="585"/>
    </location>
</feature>
<feature type="topological domain" description="Chloroplast intermembrane" evidence="2">
    <location>
        <begin position="586"/>
        <end position="692"/>
    </location>
</feature>
<feature type="transmembrane region" description="Beta stranded" evidence="2">
    <location>
        <begin position="693"/>
        <end position="701"/>
    </location>
</feature>
<feature type="topological domain" description="Cytoplasmic" evidence="2">
    <location>
        <begin position="702"/>
        <end position="713"/>
    </location>
</feature>
<feature type="transmembrane region" description="Beta stranded" evidence="2">
    <location>
        <begin position="714"/>
        <end position="722"/>
    </location>
</feature>
<feature type="topological domain" description="Chloroplast intermembrane" evidence="2">
    <location>
        <begin position="723"/>
        <end position="784"/>
    </location>
</feature>
<feature type="transmembrane region" description="Beta stranded" evidence="2">
    <location>
        <begin position="785"/>
        <end position="791"/>
    </location>
</feature>
<feature type="topological domain" description="Cytoplasmic" evidence="2">
    <location>
        <begin position="792"/>
        <end position="805"/>
    </location>
</feature>
<feature type="transmembrane region" description="Beta stranded" evidence="2">
    <location>
        <begin position="806"/>
        <end position="813"/>
    </location>
</feature>
<feature type="topological domain" description="Chloroplast intermembrane" evidence="2">
    <location>
        <begin position="814"/>
        <end position="817"/>
    </location>
</feature>
<feature type="region of interest" description="Disordered" evidence="3">
    <location>
        <begin position="14"/>
        <end position="59"/>
    </location>
</feature>
<feature type="compositionally biased region" description="Low complexity" evidence="3">
    <location>
        <begin position="26"/>
        <end position="38"/>
    </location>
</feature>
<proteinExistence type="evidence at transcript level"/>
<sequence length="817" mass="87687">MALTSQSLFFSPLAAGPSRRVRGRGRSTSVSAAASASSHNSQPHGHPQQPLAVASSSSKSESKGSKTFALASAITAAASGAFLLASSGGGFGGGAGGPLGGGGGGWGAGGGGGGGGGGGGGGFWSRIFSGGAAHADEKSSGDWDPHGLPANINVPMTKLSGLKRYKISELKFFDRAAGGGGAFTGPEDSFFEMVTLQPGGVYTKSQLLKELETLVSCGMFERVDLEGKAKPDGTLGLTVSFVESVWSAAKQFKCINVGLMSQSGQVDFDQDMTEREKMDYLRKQERDYQQRVRGAKPCILPDNVRGEVLGMMKKQEKVSARLLQRIRDHVQKWYHNEGFVCAQVVNFGNLNTSEVVCEVVEGDITKVEYQFQDKLGNFVEGNTQIPIIDRELPQQLRPGHIFNIGAGKQALKNINSLALFSNIEVNPRPDETKEGGIVVEIKLKELEPKSAEVSTEWSIVPGREGRPTLASIQPGGTVSFEHRNIYGLNRSIVGSVTSSNLLNPQDDLSFKLEYVHPYLDGVDDRNKNRTFKTSCFNTRKLSPVFVAGPNMDEAPPVWVDRVGFKANITESFTRQSKFTYGLVVEEITTRDETNSICTHGSRAMPSGGLSMDGPPTTLSGTGIDRMAFLQANITRDNTEFVNGAVIGDRCIFQLDQGLGIGSKNPFFNRHQLTLTKFVNLNKQEKGAGKPLPAVLVLHGHYAGCVGDLPSYDAFTLGGPYSVRGYGMGELGASRNVLEVASELRIPVRNTYVYGFVEHGTDLGSSKDVKGNPTEFFRRVGHGSSYGLGVKLGLVRGEYIVDHNAGTGTVFFRFGERF</sequence>
<keyword id="KW-0150">Chloroplast</keyword>
<keyword id="KW-0472">Membrane</keyword>
<keyword id="KW-0934">Plastid</keyword>
<keyword id="KW-1002">Plastid outer membrane</keyword>
<keyword id="KW-0653">Protein transport</keyword>
<keyword id="KW-1185">Reference proteome</keyword>
<keyword id="KW-0809">Transit peptide</keyword>
<keyword id="KW-0812">Transmembrane</keyword>
<keyword id="KW-1134">Transmembrane beta strand</keyword>
<keyword id="KW-0813">Transport</keyword>
<protein>
    <recommendedName>
        <fullName>Protein TOC75, chloroplastic</fullName>
    </recommendedName>
    <alternativeName>
        <fullName>75 kDa translocon at the outer-envelope-membrane of chloroplasts</fullName>
    </alternativeName>
</protein>
<organism>
    <name type="scientific">Oryza sativa subsp. japonica</name>
    <name type="common">Rice</name>
    <dbReference type="NCBI Taxonomy" id="39947"/>
    <lineage>
        <taxon>Eukaryota</taxon>
        <taxon>Viridiplantae</taxon>
        <taxon>Streptophyta</taxon>
        <taxon>Embryophyta</taxon>
        <taxon>Tracheophyta</taxon>
        <taxon>Spermatophyta</taxon>
        <taxon>Magnoliopsida</taxon>
        <taxon>Liliopsida</taxon>
        <taxon>Poales</taxon>
        <taxon>Poaceae</taxon>
        <taxon>BOP clade</taxon>
        <taxon>Oryzoideae</taxon>
        <taxon>Oryzeae</taxon>
        <taxon>Oryzinae</taxon>
        <taxon>Oryza</taxon>
        <taxon>Oryza sativa</taxon>
    </lineage>
</organism>
<dbReference type="EMBL" id="AC135207">
    <property type="protein sequence ID" value="AAP06869.1"/>
    <property type="status" value="ALT_SEQ"/>
    <property type="molecule type" value="Genomic_DNA"/>
</dbReference>
<dbReference type="EMBL" id="DP000009">
    <property type="protein sequence ID" value="ABF95211.1"/>
    <property type="molecule type" value="Genomic_DNA"/>
</dbReference>
<dbReference type="EMBL" id="AP008209">
    <property type="protein sequence ID" value="BAF11603.1"/>
    <property type="molecule type" value="Genomic_DNA"/>
</dbReference>
<dbReference type="EMBL" id="AP014959">
    <property type="protein sequence ID" value="BAS83476.1"/>
    <property type="molecule type" value="Genomic_DNA"/>
</dbReference>
<dbReference type="EMBL" id="AK120241">
    <property type="status" value="NOT_ANNOTATED_CDS"/>
    <property type="molecule type" value="mRNA"/>
</dbReference>
<dbReference type="RefSeq" id="XP_015630560.1">
    <property type="nucleotide sequence ID" value="XM_015775074.1"/>
</dbReference>
<dbReference type="SMR" id="Q84Q83"/>
<dbReference type="FunCoup" id="Q84Q83">
    <property type="interactions" value="1413"/>
</dbReference>
<dbReference type="STRING" id="39947.Q84Q83"/>
<dbReference type="PaxDb" id="39947-Q84Q83"/>
<dbReference type="EnsemblPlants" id="Os03t0271200-01">
    <property type="protein sequence ID" value="Os03t0271200-01"/>
    <property type="gene ID" value="Os03g0271200"/>
</dbReference>
<dbReference type="Gramene" id="Os03t0271200-01">
    <property type="protein sequence ID" value="Os03t0271200-01"/>
    <property type="gene ID" value="Os03g0271200"/>
</dbReference>
<dbReference type="KEGG" id="dosa:Os03g0271200"/>
<dbReference type="eggNOG" id="ENOG502QTZ3">
    <property type="taxonomic scope" value="Eukaryota"/>
</dbReference>
<dbReference type="InParanoid" id="Q84Q83"/>
<dbReference type="OMA" id="VSDIMFF"/>
<dbReference type="OrthoDB" id="1161695at2759"/>
<dbReference type="Proteomes" id="UP000000763">
    <property type="component" value="Chromosome 3"/>
</dbReference>
<dbReference type="Proteomes" id="UP000059680">
    <property type="component" value="Chromosome 3"/>
</dbReference>
<dbReference type="ExpressionAtlas" id="Q84Q83">
    <property type="expression patterns" value="baseline and differential"/>
</dbReference>
<dbReference type="GO" id="GO:0009707">
    <property type="term" value="C:chloroplast outer membrane"/>
    <property type="evidence" value="ECO:0000318"/>
    <property type="project" value="GO_Central"/>
</dbReference>
<dbReference type="GO" id="GO:0009658">
    <property type="term" value="P:chloroplast organization"/>
    <property type="evidence" value="ECO:0000318"/>
    <property type="project" value="GO_Central"/>
</dbReference>
<dbReference type="GO" id="GO:0045037">
    <property type="term" value="P:protein import into chloroplast stroma"/>
    <property type="evidence" value="ECO:0000318"/>
    <property type="project" value="GO_Central"/>
</dbReference>
<dbReference type="FunFam" id="2.40.160.50:FF:000004">
    <property type="entry name" value="Protein TOC75-3 chloroplastic"/>
    <property type="match status" value="1"/>
</dbReference>
<dbReference type="FunFam" id="3.10.20.310:FF:000011">
    <property type="entry name" value="Protein TOC75-3 chloroplastic"/>
    <property type="match status" value="1"/>
</dbReference>
<dbReference type="Gene3D" id="3.10.20.310">
    <property type="entry name" value="membrane protein fhac"/>
    <property type="match status" value="1"/>
</dbReference>
<dbReference type="Gene3D" id="2.40.160.50">
    <property type="entry name" value="membrane protein fhac: a member of the omp85/tpsb transporter family"/>
    <property type="match status" value="1"/>
</dbReference>
<dbReference type="InterPro" id="IPR000184">
    <property type="entry name" value="Bac_surfAg_D15"/>
</dbReference>
<dbReference type="InterPro" id="IPR039910">
    <property type="entry name" value="D15-like"/>
</dbReference>
<dbReference type="PANTHER" id="PTHR12815:SF42">
    <property type="entry name" value="BACTERIAL SURFACE ANTIGEN (D15) DOMAIN-CONTAINING PROTEIN"/>
    <property type="match status" value="1"/>
</dbReference>
<dbReference type="PANTHER" id="PTHR12815">
    <property type="entry name" value="SORTING AND ASSEMBLY MACHINERY SAMM50 PROTEIN FAMILY MEMBER"/>
    <property type="match status" value="1"/>
</dbReference>
<dbReference type="Pfam" id="PF01103">
    <property type="entry name" value="Omp85"/>
    <property type="match status" value="1"/>
</dbReference>
<dbReference type="Pfam" id="PF25282">
    <property type="entry name" value="POTRA1_3_Toc75"/>
    <property type="match status" value="2"/>
</dbReference>
<dbReference type="Pfam" id="PF25280">
    <property type="entry name" value="POTRA2_Toc75"/>
    <property type="match status" value="1"/>
</dbReference>